<keyword id="KW-0963">Cytoplasm</keyword>
<keyword id="KW-0369">Histidine metabolism</keyword>
<keyword id="KW-0456">Lyase</keyword>
<keyword id="KW-0520">NAD</keyword>
<gene>
    <name evidence="1" type="primary">hutU</name>
    <name type="ordered locus">BCA_3745</name>
</gene>
<comment type="function">
    <text evidence="1">Catalyzes the conversion of urocanate to 4-imidazolone-5-propionate.</text>
</comment>
<comment type="catalytic activity">
    <reaction evidence="1">
        <text>4-imidazolone-5-propanoate = trans-urocanate + H2O</text>
        <dbReference type="Rhea" id="RHEA:13101"/>
        <dbReference type="ChEBI" id="CHEBI:15377"/>
        <dbReference type="ChEBI" id="CHEBI:17771"/>
        <dbReference type="ChEBI" id="CHEBI:77893"/>
        <dbReference type="EC" id="4.2.1.49"/>
    </reaction>
</comment>
<comment type="cofactor">
    <cofactor evidence="1">
        <name>NAD(+)</name>
        <dbReference type="ChEBI" id="CHEBI:57540"/>
    </cofactor>
    <text evidence="1">Binds 1 NAD(+) per subunit.</text>
</comment>
<comment type="pathway">
    <text evidence="1">Amino-acid degradation; L-histidine degradation into L-glutamate; N-formimidoyl-L-glutamate from L-histidine: step 2/3.</text>
</comment>
<comment type="subcellular location">
    <subcellularLocation>
        <location evidence="1">Cytoplasm</location>
    </subcellularLocation>
</comment>
<comment type="similarity">
    <text evidence="1">Belongs to the urocanase family.</text>
</comment>
<reference key="1">
    <citation type="submission" date="2009-02" db="EMBL/GenBank/DDBJ databases">
        <title>Genome sequence of Bacillus cereus 03BB102.</title>
        <authorList>
            <person name="Dodson R.J."/>
            <person name="Jackson P."/>
            <person name="Munk A.C."/>
            <person name="Brettin T."/>
            <person name="Bruce D."/>
            <person name="Detter C."/>
            <person name="Tapia R."/>
            <person name="Han C."/>
            <person name="Sutton G."/>
            <person name="Sims D."/>
        </authorList>
    </citation>
    <scope>NUCLEOTIDE SEQUENCE [LARGE SCALE GENOMIC DNA]</scope>
    <source>
        <strain>03BB102</strain>
    </source>
</reference>
<organism>
    <name type="scientific">Bacillus cereus (strain 03BB102)</name>
    <dbReference type="NCBI Taxonomy" id="572264"/>
    <lineage>
        <taxon>Bacteria</taxon>
        <taxon>Bacillati</taxon>
        <taxon>Bacillota</taxon>
        <taxon>Bacilli</taxon>
        <taxon>Bacillales</taxon>
        <taxon>Bacillaceae</taxon>
        <taxon>Bacillus</taxon>
        <taxon>Bacillus cereus group</taxon>
    </lineage>
</organism>
<evidence type="ECO:0000255" key="1">
    <source>
        <dbReference type="HAMAP-Rule" id="MF_00577"/>
    </source>
</evidence>
<proteinExistence type="inferred from homology"/>
<name>HUTU_BACC3</name>
<accession>C1EN92</accession>
<protein>
    <recommendedName>
        <fullName evidence="1">Urocanate hydratase</fullName>
        <shortName evidence="1">Urocanase</shortName>
        <ecNumber evidence="1">4.2.1.49</ecNumber>
    </recommendedName>
    <alternativeName>
        <fullName evidence="1">Imidazolonepropionate hydrolase</fullName>
    </alternativeName>
</protein>
<dbReference type="EC" id="4.2.1.49" evidence="1"/>
<dbReference type="EMBL" id="CP001407">
    <property type="protein sequence ID" value="ACO28311.1"/>
    <property type="molecule type" value="Genomic_DNA"/>
</dbReference>
<dbReference type="RefSeq" id="WP_000416950.1">
    <property type="nucleotide sequence ID" value="NC_012472.1"/>
</dbReference>
<dbReference type="SMR" id="C1EN92"/>
<dbReference type="KEGG" id="bcx:BCA_3745"/>
<dbReference type="PATRIC" id="fig|572264.18.peg.3706"/>
<dbReference type="UniPathway" id="UPA00379">
    <property type="reaction ID" value="UER00550"/>
</dbReference>
<dbReference type="Proteomes" id="UP000002210">
    <property type="component" value="Chromosome"/>
</dbReference>
<dbReference type="GO" id="GO:0005737">
    <property type="term" value="C:cytoplasm"/>
    <property type="evidence" value="ECO:0007669"/>
    <property type="project" value="UniProtKB-SubCell"/>
</dbReference>
<dbReference type="GO" id="GO:0016153">
    <property type="term" value="F:urocanate hydratase activity"/>
    <property type="evidence" value="ECO:0007669"/>
    <property type="project" value="UniProtKB-UniRule"/>
</dbReference>
<dbReference type="GO" id="GO:0019556">
    <property type="term" value="P:L-histidine catabolic process to glutamate and formamide"/>
    <property type="evidence" value="ECO:0007669"/>
    <property type="project" value="UniProtKB-UniPathway"/>
</dbReference>
<dbReference type="GO" id="GO:0019557">
    <property type="term" value="P:L-histidine catabolic process to glutamate and formate"/>
    <property type="evidence" value="ECO:0007669"/>
    <property type="project" value="UniProtKB-UniPathway"/>
</dbReference>
<dbReference type="FunFam" id="3.40.50.10730:FF:000001">
    <property type="entry name" value="Urocanate hydratase"/>
    <property type="match status" value="1"/>
</dbReference>
<dbReference type="Gene3D" id="3.40.50.10730">
    <property type="entry name" value="Urocanase like domains"/>
    <property type="match status" value="1"/>
</dbReference>
<dbReference type="Gene3D" id="3.40.1770.10">
    <property type="entry name" value="Urocanase superfamily"/>
    <property type="match status" value="1"/>
</dbReference>
<dbReference type="HAMAP" id="MF_00577">
    <property type="entry name" value="HutU"/>
    <property type="match status" value="1"/>
</dbReference>
<dbReference type="InterPro" id="IPR055351">
    <property type="entry name" value="Urocanase"/>
</dbReference>
<dbReference type="InterPro" id="IPR023637">
    <property type="entry name" value="Urocanase-like"/>
</dbReference>
<dbReference type="InterPro" id="IPR035401">
    <property type="entry name" value="Urocanase_C"/>
</dbReference>
<dbReference type="InterPro" id="IPR038364">
    <property type="entry name" value="Urocanase_central_sf"/>
</dbReference>
<dbReference type="InterPro" id="IPR023636">
    <property type="entry name" value="Urocanase_CS"/>
</dbReference>
<dbReference type="InterPro" id="IPR035400">
    <property type="entry name" value="Urocanase_N"/>
</dbReference>
<dbReference type="InterPro" id="IPR035085">
    <property type="entry name" value="Urocanase_Rossmann-like"/>
</dbReference>
<dbReference type="InterPro" id="IPR036190">
    <property type="entry name" value="Urocanase_sf"/>
</dbReference>
<dbReference type="NCBIfam" id="TIGR01228">
    <property type="entry name" value="hutU"/>
    <property type="match status" value="1"/>
</dbReference>
<dbReference type="NCBIfam" id="NF003820">
    <property type="entry name" value="PRK05414.1"/>
    <property type="match status" value="1"/>
</dbReference>
<dbReference type="PANTHER" id="PTHR12216">
    <property type="entry name" value="UROCANATE HYDRATASE"/>
    <property type="match status" value="1"/>
</dbReference>
<dbReference type="PANTHER" id="PTHR12216:SF4">
    <property type="entry name" value="UROCANATE HYDRATASE"/>
    <property type="match status" value="1"/>
</dbReference>
<dbReference type="Pfam" id="PF01175">
    <property type="entry name" value="Urocanase"/>
    <property type="match status" value="1"/>
</dbReference>
<dbReference type="Pfam" id="PF17392">
    <property type="entry name" value="Urocanase_C"/>
    <property type="match status" value="1"/>
</dbReference>
<dbReference type="Pfam" id="PF17391">
    <property type="entry name" value="Urocanase_N"/>
    <property type="match status" value="1"/>
</dbReference>
<dbReference type="PIRSF" id="PIRSF001423">
    <property type="entry name" value="Urocanate_hydrat"/>
    <property type="match status" value="1"/>
</dbReference>
<dbReference type="SUPFAM" id="SSF111326">
    <property type="entry name" value="Urocanase"/>
    <property type="match status" value="1"/>
</dbReference>
<dbReference type="PROSITE" id="PS01233">
    <property type="entry name" value="UROCANASE"/>
    <property type="match status" value="1"/>
</dbReference>
<feature type="chain" id="PRO_1000199896" description="Urocanate hydratase">
    <location>
        <begin position="1"/>
        <end position="552"/>
    </location>
</feature>
<feature type="active site" evidence="1">
    <location>
        <position position="407"/>
    </location>
</feature>
<feature type="binding site" evidence="1">
    <location>
        <begin position="49"/>
        <end position="50"/>
    </location>
    <ligand>
        <name>NAD(+)</name>
        <dbReference type="ChEBI" id="CHEBI:57540"/>
    </ligand>
</feature>
<feature type="binding site" evidence="1">
    <location>
        <position position="127"/>
    </location>
    <ligand>
        <name>NAD(+)</name>
        <dbReference type="ChEBI" id="CHEBI:57540"/>
    </ligand>
</feature>
<feature type="binding site" evidence="1">
    <location>
        <begin position="173"/>
        <end position="175"/>
    </location>
    <ligand>
        <name>NAD(+)</name>
        <dbReference type="ChEBI" id="CHEBI:57540"/>
    </ligand>
</feature>
<feature type="binding site" evidence="1">
    <location>
        <position position="193"/>
    </location>
    <ligand>
        <name>NAD(+)</name>
        <dbReference type="ChEBI" id="CHEBI:57540"/>
    </ligand>
</feature>
<feature type="binding site" evidence="1">
    <location>
        <begin position="239"/>
        <end position="240"/>
    </location>
    <ligand>
        <name>NAD(+)</name>
        <dbReference type="ChEBI" id="CHEBI:57540"/>
    </ligand>
</feature>
<feature type="binding site" evidence="1">
    <location>
        <begin position="260"/>
        <end position="264"/>
    </location>
    <ligand>
        <name>NAD(+)</name>
        <dbReference type="ChEBI" id="CHEBI:57540"/>
    </ligand>
</feature>
<feature type="binding site" evidence="1">
    <location>
        <begin position="270"/>
        <end position="271"/>
    </location>
    <ligand>
        <name>NAD(+)</name>
        <dbReference type="ChEBI" id="CHEBI:57540"/>
    </ligand>
</feature>
<feature type="binding site" evidence="1">
    <location>
        <position position="319"/>
    </location>
    <ligand>
        <name>NAD(+)</name>
        <dbReference type="ChEBI" id="CHEBI:57540"/>
    </ligand>
</feature>
<feature type="binding site" evidence="1">
    <location>
        <position position="489"/>
    </location>
    <ligand>
        <name>NAD(+)</name>
        <dbReference type="ChEBI" id="CHEBI:57540"/>
    </ligand>
</feature>
<sequence length="552" mass="60761">MEKVQQTIRAPRGTELQTKGWVQEAALRMLMNNLDPEVAEKPEELVVYGGIGRAARNWESYQAIVDSLKTLESDETLLVQSGKPVAIFKSHEDAPRVLLANSNLVPKWANWDHFRELEKKGLMMYGQMTAGSWIYIGTQGILQGTYETFGEAARQHFGGSLKGTLTLTAGLGGMGGAQPLAVTMNGGVVIAIDVDKRSIDRRIEKRYCDMYTESLEEALAVANEYKEKKEPISIGLLGNAAEILPELVKRNITPDLVTDQTSAHDPLNGYIPVGYTLEEAAKLREEDPERYVQLSKESMTKHVEAMLAMQEKGAITFDYGNNIRQVAFDEGLKNAFDFPGFVPAFIRPLFCEGKGPFRWVALSGDPEDIYKTDEVILREFADNEHLCNWIRMARQQVEFQGLPSRICWLGYGERAKFGRIINEMVANGELSAPIVIGRDHLDCGSVASPNRETEAMKDGSDAVADWPILNALINSVNGASWVSVHHGGGVGMGYSLHAGMVIVADGTEAAAKRIERVLTSDPGMGVVRHVDAGYDLAVKTAKEKGVNIPMMK</sequence>